<protein>
    <recommendedName>
        <fullName evidence="1">Ribosomal protein uS12 methylthiotransferase RimO</fullName>
        <shortName evidence="1">uS12 MTTase</shortName>
        <shortName evidence="1">uS12 methylthiotransferase</shortName>
        <ecNumber evidence="1">2.8.4.4</ecNumber>
    </recommendedName>
    <alternativeName>
        <fullName evidence="1">Ribosomal protein uS12 (aspartate-C(3))-methylthiotransferase</fullName>
    </alternativeName>
    <alternativeName>
        <fullName evidence="1">Ribosome maturation factor RimO</fullName>
    </alternativeName>
</protein>
<dbReference type="EC" id="2.8.4.4" evidence="1"/>
<dbReference type="EMBL" id="AE014075">
    <property type="protein sequence ID" value="AAN79393.1"/>
    <property type="molecule type" value="Genomic_DNA"/>
</dbReference>
<dbReference type="RefSeq" id="WP_000049378.1">
    <property type="nucleotide sequence ID" value="NZ_CP051263.1"/>
</dbReference>
<dbReference type="SMR" id="Q8FJK5"/>
<dbReference type="STRING" id="199310.c0920"/>
<dbReference type="KEGG" id="ecc:c0920"/>
<dbReference type="eggNOG" id="COG0621">
    <property type="taxonomic scope" value="Bacteria"/>
</dbReference>
<dbReference type="HOGENOM" id="CLU_018697_0_0_6"/>
<dbReference type="BioCyc" id="ECOL199310:C0920-MONOMER"/>
<dbReference type="Proteomes" id="UP000001410">
    <property type="component" value="Chromosome"/>
</dbReference>
<dbReference type="GO" id="GO:0005829">
    <property type="term" value="C:cytosol"/>
    <property type="evidence" value="ECO:0007669"/>
    <property type="project" value="TreeGrafter"/>
</dbReference>
<dbReference type="GO" id="GO:0051539">
    <property type="term" value="F:4 iron, 4 sulfur cluster binding"/>
    <property type="evidence" value="ECO:0007669"/>
    <property type="project" value="UniProtKB-UniRule"/>
</dbReference>
<dbReference type="GO" id="GO:0035599">
    <property type="term" value="F:aspartic acid methylthiotransferase activity"/>
    <property type="evidence" value="ECO:0007669"/>
    <property type="project" value="TreeGrafter"/>
</dbReference>
<dbReference type="GO" id="GO:0046872">
    <property type="term" value="F:metal ion binding"/>
    <property type="evidence" value="ECO:0007669"/>
    <property type="project" value="UniProtKB-KW"/>
</dbReference>
<dbReference type="GO" id="GO:0103039">
    <property type="term" value="F:protein methylthiotransferase activity"/>
    <property type="evidence" value="ECO:0007669"/>
    <property type="project" value="UniProtKB-EC"/>
</dbReference>
<dbReference type="GO" id="GO:0006400">
    <property type="term" value="P:tRNA modification"/>
    <property type="evidence" value="ECO:0007669"/>
    <property type="project" value="InterPro"/>
</dbReference>
<dbReference type="CDD" id="cd01335">
    <property type="entry name" value="Radical_SAM"/>
    <property type="match status" value="1"/>
</dbReference>
<dbReference type="FunFam" id="2.40.50.140:FF:000060">
    <property type="entry name" value="Ribosomal protein S12 methylthiotransferase RimO"/>
    <property type="match status" value="1"/>
</dbReference>
<dbReference type="FunFam" id="3.40.50.12160:FF:000002">
    <property type="entry name" value="Ribosomal protein S12 methylthiotransferase RimO"/>
    <property type="match status" value="1"/>
</dbReference>
<dbReference type="FunFam" id="3.80.30.20:FF:000001">
    <property type="entry name" value="tRNA-2-methylthio-N(6)-dimethylallyladenosine synthase 2"/>
    <property type="match status" value="1"/>
</dbReference>
<dbReference type="Gene3D" id="3.40.50.12160">
    <property type="entry name" value="Methylthiotransferase, N-terminal domain"/>
    <property type="match status" value="1"/>
</dbReference>
<dbReference type="Gene3D" id="2.40.50.140">
    <property type="entry name" value="Nucleic acid-binding proteins"/>
    <property type="match status" value="1"/>
</dbReference>
<dbReference type="Gene3D" id="3.80.30.20">
    <property type="entry name" value="tm_1862 like domain"/>
    <property type="match status" value="1"/>
</dbReference>
<dbReference type="HAMAP" id="MF_01865">
    <property type="entry name" value="MTTase_RimO"/>
    <property type="match status" value="1"/>
</dbReference>
<dbReference type="InterPro" id="IPR006638">
    <property type="entry name" value="Elp3/MiaA/NifB-like_rSAM"/>
</dbReference>
<dbReference type="InterPro" id="IPR005839">
    <property type="entry name" value="Methylthiotransferase"/>
</dbReference>
<dbReference type="InterPro" id="IPR020612">
    <property type="entry name" value="Methylthiotransferase_CS"/>
</dbReference>
<dbReference type="InterPro" id="IPR013848">
    <property type="entry name" value="Methylthiotransferase_N"/>
</dbReference>
<dbReference type="InterPro" id="IPR038135">
    <property type="entry name" value="Methylthiotransferase_N_sf"/>
</dbReference>
<dbReference type="InterPro" id="IPR012340">
    <property type="entry name" value="NA-bd_OB-fold"/>
</dbReference>
<dbReference type="InterPro" id="IPR005840">
    <property type="entry name" value="Ribosomal_uS12_MeSTrfase_RimO"/>
</dbReference>
<dbReference type="InterPro" id="IPR007197">
    <property type="entry name" value="rSAM"/>
</dbReference>
<dbReference type="InterPro" id="IPR023404">
    <property type="entry name" value="rSAM_horseshoe"/>
</dbReference>
<dbReference type="InterPro" id="IPR002792">
    <property type="entry name" value="TRAM_dom"/>
</dbReference>
<dbReference type="NCBIfam" id="TIGR01125">
    <property type="entry name" value="30S ribosomal protein S12 methylthiotransferase RimO"/>
    <property type="match status" value="1"/>
</dbReference>
<dbReference type="NCBIfam" id="TIGR00089">
    <property type="entry name" value="MiaB/RimO family radical SAM methylthiotransferase"/>
    <property type="match status" value="1"/>
</dbReference>
<dbReference type="PANTHER" id="PTHR43837">
    <property type="entry name" value="RIBOSOMAL PROTEIN S12 METHYLTHIOTRANSFERASE RIMO"/>
    <property type="match status" value="1"/>
</dbReference>
<dbReference type="PANTHER" id="PTHR43837:SF1">
    <property type="entry name" value="RIBOSOMAL PROTEIN US12 METHYLTHIOTRANSFERASE RIMO"/>
    <property type="match status" value="1"/>
</dbReference>
<dbReference type="Pfam" id="PF04055">
    <property type="entry name" value="Radical_SAM"/>
    <property type="match status" value="1"/>
</dbReference>
<dbReference type="Pfam" id="PF18693">
    <property type="entry name" value="TRAM_2"/>
    <property type="match status" value="1"/>
</dbReference>
<dbReference type="Pfam" id="PF00919">
    <property type="entry name" value="UPF0004"/>
    <property type="match status" value="1"/>
</dbReference>
<dbReference type="SFLD" id="SFLDG01082">
    <property type="entry name" value="B12-binding_domain_containing"/>
    <property type="match status" value="1"/>
</dbReference>
<dbReference type="SFLD" id="SFLDS00029">
    <property type="entry name" value="Radical_SAM"/>
    <property type="match status" value="1"/>
</dbReference>
<dbReference type="SFLD" id="SFLDF00274">
    <property type="entry name" value="ribosomal_protein_S12_methylth"/>
    <property type="match status" value="1"/>
</dbReference>
<dbReference type="SMART" id="SM00729">
    <property type="entry name" value="Elp3"/>
    <property type="match status" value="1"/>
</dbReference>
<dbReference type="SUPFAM" id="SSF102114">
    <property type="entry name" value="Radical SAM enzymes"/>
    <property type="match status" value="1"/>
</dbReference>
<dbReference type="PROSITE" id="PS51449">
    <property type="entry name" value="MTTASE_N"/>
    <property type="match status" value="1"/>
</dbReference>
<dbReference type="PROSITE" id="PS01278">
    <property type="entry name" value="MTTASE_RADICAL"/>
    <property type="match status" value="1"/>
</dbReference>
<dbReference type="PROSITE" id="PS51918">
    <property type="entry name" value="RADICAL_SAM"/>
    <property type="match status" value="1"/>
</dbReference>
<dbReference type="PROSITE" id="PS50926">
    <property type="entry name" value="TRAM"/>
    <property type="match status" value="1"/>
</dbReference>
<gene>
    <name evidence="1" type="primary">rimO</name>
    <name type="ordered locus">c0920</name>
</gene>
<evidence type="ECO:0000255" key="1">
    <source>
        <dbReference type="HAMAP-Rule" id="MF_01865"/>
    </source>
</evidence>
<evidence type="ECO:0000255" key="2">
    <source>
        <dbReference type="PROSITE-ProRule" id="PRU01266"/>
    </source>
</evidence>
<accession>Q8FJK5</accession>
<comment type="function">
    <text evidence="1">Catalyzes the methylthiolation of an aspartic acid residue of ribosomal protein uS12.</text>
</comment>
<comment type="catalytic activity">
    <reaction evidence="1">
        <text>L-aspartate(89)-[ribosomal protein uS12]-hydrogen + (sulfur carrier)-SH + AH2 + 2 S-adenosyl-L-methionine = 3-methylsulfanyl-L-aspartate(89)-[ribosomal protein uS12]-hydrogen + (sulfur carrier)-H + 5'-deoxyadenosine + L-methionine + A + S-adenosyl-L-homocysteine + 2 H(+)</text>
        <dbReference type="Rhea" id="RHEA:37087"/>
        <dbReference type="Rhea" id="RHEA-COMP:10460"/>
        <dbReference type="Rhea" id="RHEA-COMP:10461"/>
        <dbReference type="Rhea" id="RHEA-COMP:14737"/>
        <dbReference type="Rhea" id="RHEA-COMP:14739"/>
        <dbReference type="ChEBI" id="CHEBI:13193"/>
        <dbReference type="ChEBI" id="CHEBI:15378"/>
        <dbReference type="ChEBI" id="CHEBI:17319"/>
        <dbReference type="ChEBI" id="CHEBI:17499"/>
        <dbReference type="ChEBI" id="CHEBI:29917"/>
        <dbReference type="ChEBI" id="CHEBI:29961"/>
        <dbReference type="ChEBI" id="CHEBI:57844"/>
        <dbReference type="ChEBI" id="CHEBI:57856"/>
        <dbReference type="ChEBI" id="CHEBI:59789"/>
        <dbReference type="ChEBI" id="CHEBI:64428"/>
        <dbReference type="ChEBI" id="CHEBI:73599"/>
        <dbReference type="EC" id="2.8.4.4"/>
    </reaction>
</comment>
<comment type="cofactor">
    <cofactor evidence="1">
        <name>[4Fe-4S] cluster</name>
        <dbReference type="ChEBI" id="CHEBI:49883"/>
    </cofactor>
    <text evidence="1">Binds 2 [4Fe-4S] clusters. One cluster is coordinated with 3 cysteines and an exchangeable S-adenosyl-L-methionine.</text>
</comment>
<comment type="subcellular location">
    <subcellularLocation>
        <location evidence="1">Cytoplasm</location>
    </subcellularLocation>
</comment>
<comment type="similarity">
    <text evidence="1">Belongs to the methylthiotransferase family. RimO subfamily.</text>
</comment>
<keyword id="KW-0004">4Fe-4S</keyword>
<keyword id="KW-0963">Cytoplasm</keyword>
<keyword id="KW-0408">Iron</keyword>
<keyword id="KW-0411">Iron-sulfur</keyword>
<keyword id="KW-0479">Metal-binding</keyword>
<keyword id="KW-1185">Reference proteome</keyword>
<keyword id="KW-0949">S-adenosyl-L-methionine</keyword>
<keyword id="KW-0808">Transferase</keyword>
<organism>
    <name type="scientific">Escherichia coli O6:H1 (strain CFT073 / ATCC 700928 / UPEC)</name>
    <dbReference type="NCBI Taxonomy" id="199310"/>
    <lineage>
        <taxon>Bacteria</taxon>
        <taxon>Pseudomonadati</taxon>
        <taxon>Pseudomonadota</taxon>
        <taxon>Gammaproteobacteria</taxon>
        <taxon>Enterobacterales</taxon>
        <taxon>Enterobacteriaceae</taxon>
        <taxon>Escherichia</taxon>
    </lineage>
</organism>
<name>RIMO_ECOL6</name>
<sequence>MSKVTPQPKIGFVSLGCPKNLVDSERILTELRTEGYDVVPSYDDADMVIVNTCGFIDSAVQESLEAIGEALNENGKVIVTGCLGAKEDQIREVHPKVLEITGPHSYEQVLEHVHHYVPKPKHNPFLSLVPEQGVKLTPRHYAYLKISEGCNHRCTFCIIPSMRGDLVSRPIGEVLSEAKRLVDAGVKEILVISQDTSAYGVDVKHRTGFHNGEPVKTSMVSLCEQLSKLGIWTRLHYVYPYPHVDDVIPLMAEGKILPYLDIPLQHASPRILKLMKRPGSVDRQLARIKQWRKICPELTLRSTFIVGFPGETEEDFQMLLDFLKEARLDRVGCFKYSPVEGADANALPDQVPEEVKEERWNRFMQLQQQISAERLQEKVGREILVIIDEVDEEGAIGRSMADAPEIDGAVYLNGETNVKPGDILRVKVEHADEYDLWGSRV</sequence>
<reference key="1">
    <citation type="journal article" date="2002" name="Proc. Natl. Acad. Sci. U.S.A.">
        <title>Extensive mosaic structure revealed by the complete genome sequence of uropathogenic Escherichia coli.</title>
        <authorList>
            <person name="Welch R.A."/>
            <person name="Burland V."/>
            <person name="Plunkett G. III"/>
            <person name="Redford P."/>
            <person name="Roesch P."/>
            <person name="Rasko D."/>
            <person name="Buckles E.L."/>
            <person name="Liou S.-R."/>
            <person name="Boutin A."/>
            <person name="Hackett J."/>
            <person name="Stroud D."/>
            <person name="Mayhew G.F."/>
            <person name="Rose D.J."/>
            <person name="Zhou S."/>
            <person name="Schwartz D.C."/>
            <person name="Perna N.T."/>
            <person name="Mobley H.L.T."/>
            <person name="Donnenberg M.S."/>
            <person name="Blattner F.R."/>
        </authorList>
    </citation>
    <scope>NUCLEOTIDE SEQUENCE [LARGE SCALE GENOMIC DNA]</scope>
    <source>
        <strain>CFT073 / ATCC 700928 / UPEC</strain>
    </source>
</reference>
<feature type="chain" id="PRO_0000374827" description="Ribosomal protein uS12 methylthiotransferase RimO">
    <location>
        <begin position="1"/>
        <end position="441"/>
    </location>
</feature>
<feature type="domain" description="MTTase N-terminal" evidence="1">
    <location>
        <begin position="8"/>
        <end position="118"/>
    </location>
</feature>
<feature type="domain" description="Radical SAM core" evidence="2">
    <location>
        <begin position="136"/>
        <end position="373"/>
    </location>
</feature>
<feature type="domain" description="TRAM" evidence="1">
    <location>
        <begin position="376"/>
        <end position="441"/>
    </location>
</feature>
<feature type="binding site" evidence="1">
    <location>
        <position position="17"/>
    </location>
    <ligand>
        <name>[4Fe-4S] cluster</name>
        <dbReference type="ChEBI" id="CHEBI:49883"/>
        <label>1</label>
    </ligand>
</feature>
<feature type="binding site" evidence="1">
    <location>
        <position position="53"/>
    </location>
    <ligand>
        <name>[4Fe-4S] cluster</name>
        <dbReference type="ChEBI" id="CHEBI:49883"/>
        <label>1</label>
    </ligand>
</feature>
<feature type="binding site" evidence="1">
    <location>
        <position position="82"/>
    </location>
    <ligand>
        <name>[4Fe-4S] cluster</name>
        <dbReference type="ChEBI" id="CHEBI:49883"/>
        <label>1</label>
    </ligand>
</feature>
<feature type="binding site" evidence="1">
    <location>
        <position position="150"/>
    </location>
    <ligand>
        <name>[4Fe-4S] cluster</name>
        <dbReference type="ChEBI" id="CHEBI:49883"/>
        <label>2</label>
        <note>4Fe-4S-S-AdoMet</note>
    </ligand>
</feature>
<feature type="binding site" evidence="1">
    <location>
        <position position="154"/>
    </location>
    <ligand>
        <name>[4Fe-4S] cluster</name>
        <dbReference type="ChEBI" id="CHEBI:49883"/>
        <label>2</label>
        <note>4Fe-4S-S-AdoMet</note>
    </ligand>
</feature>
<feature type="binding site" evidence="1">
    <location>
        <position position="157"/>
    </location>
    <ligand>
        <name>[4Fe-4S] cluster</name>
        <dbReference type="ChEBI" id="CHEBI:49883"/>
        <label>2</label>
        <note>4Fe-4S-S-AdoMet</note>
    </ligand>
</feature>
<proteinExistence type="inferred from homology"/>